<proteinExistence type="inferred from homology"/>
<keyword id="KW-0067">ATP-binding</keyword>
<keyword id="KW-0436">Ligase</keyword>
<keyword id="KW-0547">Nucleotide-binding</keyword>
<keyword id="KW-0658">Purine biosynthesis</keyword>
<keyword id="KW-1185">Reference proteome</keyword>
<reference key="1">
    <citation type="journal article" date="2009" name="Appl. Environ. Microbiol.">
        <title>Metabolic versatility and indigenous origin of the archaeon Thermococcus sibiricus, isolated from a siberian oil reservoir, as revealed by genome analysis.</title>
        <authorList>
            <person name="Mardanov A.V."/>
            <person name="Ravin N.V."/>
            <person name="Svetlitchnyi V.A."/>
            <person name="Beletsky A.V."/>
            <person name="Miroshnichenko M.L."/>
            <person name="Bonch-Osmolovskaya E.A."/>
            <person name="Skryabin K.G."/>
        </authorList>
    </citation>
    <scope>NUCLEOTIDE SEQUENCE [LARGE SCALE GENOMIC DNA]</scope>
    <source>
        <strain>DSM 12597 / MM 739</strain>
    </source>
</reference>
<accession>C6A0I8</accession>
<comment type="catalytic activity">
    <reaction evidence="1">
        <text>5-amino-1-(5-phospho-D-ribosyl)imidazole-4-carboxylate + L-aspartate + ATP = (2S)-2-[5-amino-1-(5-phospho-beta-D-ribosyl)imidazole-4-carboxamido]succinate + ADP + phosphate + 2 H(+)</text>
        <dbReference type="Rhea" id="RHEA:22628"/>
        <dbReference type="ChEBI" id="CHEBI:15378"/>
        <dbReference type="ChEBI" id="CHEBI:29991"/>
        <dbReference type="ChEBI" id="CHEBI:30616"/>
        <dbReference type="ChEBI" id="CHEBI:43474"/>
        <dbReference type="ChEBI" id="CHEBI:58443"/>
        <dbReference type="ChEBI" id="CHEBI:77657"/>
        <dbReference type="ChEBI" id="CHEBI:456216"/>
        <dbReference type="EC" id="6.3.2.6"/>
    </reaction>
</comment>
<comment type="pathway">
    <text evidence="1">Purine metabolism; IMP biosynthesis via de novo pathway; 5-amino-1-(5-phospho-D-ribosyl)imidazole-4-carboxamide from 5-amino-1-(5-phospho-D-ribosyl)imidazole-4-carboxylate: step 1/2.</text>
</comment>
<comment type="similarity">
    <text evidence="1">Belongs to the SAICAR synthetase family.</text>
</comment>
<feature type="chain" id="PRO_1000203242" description="Phosphoribosylaminoimidazole-succinocarboxamide synthase">
    <location>
        <begin position="1"/>
        <end position="233"/>
    </location>
</feature>
<name>PUR7_THESM</name>
<gene>
    <name evidence="1" type="primary">purC</name>
    <name type="ordered locus">TSIB_0065</name>
</gene>
<dbReference type="EC" id="6.3.2.6" evidence="1"/>
<dbReference type="EMBL" id="CP001463">
    <property type="protein sequence ID" value="ACS89133.1"/>
    <property type="molecule type" value="Genomic_DNA"/>
</dbReference>
<dbReference type="SMR" id="C6A0I8"/>
<dbReference type="STRING" id="604354.TSIB_0065"/>
<dbReference type="KEGG" id="tsi:TSIB_0065"/>
<dbReference type="eggNOG" id="arCOG04421">
    <property type="taxonomic scope" value="Archaea"/>
</dbReference>
<dbReference type="HOGENOM" id="CLU_061495_2_0_2"/>
<dbReference type="OrthoDB" id="10775at2157"/>
<dbReference type="UniPathway" id="UPA00074">
    <property type="reaction ID" value="UER00131"/>
</dbReference>
<dbReference type="Proteomes" id="UP000009079">
    <property type="component" value="Chromosome"/>
</dbReference>
<dbReference type="GO" id="GO:0005524">
    <property type="term" value="F:ATP binding"/>
    <property type="evidence" value="ECO:0007669"/>
    <property type="project" value="UniProtKB-KW"/>
</dbReference>
<dbReference type="GO" id="GO:0004639">
    <property type="term" value="F:phosphoribosylaminoimidazolesuccinocarboxamide synthase activity"/>
    <property type="evidence" value="ECO:0007669"/>
    <property type="project" value="UniProtKB-UniRule"/>
</dbReference>
<dbReference type="GO" id="GO:0006189">
    <property type="term" value="P:'de novo' IMP biosynthetic process"/>
    <property type="evidence" value="ECO:0007669"/>
    <property type="project" value="UniProtKB-UniRule"/>
</dbReference>
<dbReference type="GO" id="GO:0009236">
    <property type="term" value="P:cobalamin biosynthetic process"/>
    <property type="evidence" value="ECO:0007669"/>
    <property type="project" value="InterPro"/>
</dbReference>
<dbReference type="CDD" id="cd01415">
    <property type="entry name" value="SAICAR_synt_PurC"/>
    <property type="match status" value="1"/>
</dbReference>
<dbReference type="FunFam" id="3.30.200.20:FF:000086">
    <property type="entry name" value="Phosphoribosylaminoimidazole-succinocarboxamide synthase"/>
    <property type="match status" value="1"/>
</dbReference>
<dbReference type="FunFam" id="3.30.470.20:FF:000006">
    <property type="entry name" value="Phosphoribosylaminoimidazole-succinocarboxamide synthase"/>
    <property type="match status" value="1"/>
</dbReference>
<dbReference type="Gene3D" id="3.30.470.20">
    <property type="entry name" value="ATP-grasp fold, B domain"/>
    <property type="match status" value="1"/>
</dbReference>
<dbReference type="Gene3D" id="3.30.200.20">
    <property type="entry name" value="Phosphorylase Kinase, domain 1"/>
    <property type="match status" value="1"/>
</dbReference>
<dbReference type="HAMAP" id="MF_00137">
    <property type="entry name" value="SAICAR_synth"/>
    <property type="match status" value="1"/>
</dbReference>
<dbReference type="InterPro" id="IPR028923">
    <property type="entry name" value="SAICAR_synt/ADE2_N"/>
</dbReference>
<dbReference type="InterPro" id="IPR033934">
    <property type="entry name" value="SAICAR_synt_PurC"/>
</dbReference>
<dbReference type="InterPro" id="IPR001636">
    <property type="entry name" value="SAICAR_synth"/>
</dbReference>
<dbReference type="InterPro" id="IPR050089">
    <property type="entry name" value="SAICAR_synthetase"/>
</dbReference>
<dbReference type="InterPro" id="IPR018236">
    <property type="entry name" value="SAICAR_synthetase_CS"/>
</dbReference>
<dbReference type="NCBIfam" id="TIGR00081">
    <property type="entry name" value="purC"/>
    <property type="match status" value="1"/>
</dbReference>
<dbReference type="PANTHER" id="PTHR43599">
    <property type="entry name" value="MULTIFUNCTIONAL PROTEIN ADE2"/>
    <property type="match status" value="1"/>
</dbReference>
<dbReference type="PANTHER" id="PTHR43599:SF3">
    <property type="entry name" value="SI:DKEY-6E2.2"/>
    <property type="match status" value="1"/>
</dbReference>
<dbReference type="Pfam" id="PF01259">
    <property type="entry name" value="SAICAR_synt"/>
    <property type="match status" value="1"/>
</dbReference>
<dbReference type="SUPFAM" id="SSF56104">
    <property type="entry name" value="SAICAR synthase-like"/>
    <property type="match status" value="1"/>
</dbReference>
<dbReference type="PROSITE" id="PS01057">
    <property type="entry name" value="SAICAR_SYNTHETASE_1"/>
    <property type="match status" value="1"/>
</dbReference>
<dbReference type="PROSITE" id="PS01058">
    <property type="entry name" value="SAICAR_SYNTHETASE_2"/>
    <property type="match status" value="1"/>
</dbReference>
<organism>
    <name type="scientific">Thermococcus sibiricus (strain DSM 12597 / MM 739)</name>
    <dbReference type="NCBI Taxonomy" id="604354"/>
    <lineage>
        <taxon>Archaea</taxon>
        <taxon>Methanobacteriati</taxon>
        <taxon>Methanobacteriota</taxon>
        <taxon>Thermococci</taxon>
        <taxon>Thermococcales</taxon>
        <taxon>Thermococcaceae</taxon>
        <taxon>Thermococcus</taxon>
    </lineage>
</organism>
<sequence length="233" mass="26596">MVIVMEIYEGKAKKVIPLDDGKVIIEFKDDATAFNGKKKAQFKGKGWLNAQISAILFKVLEEKGIKTHFIGVAGDNKLIVEKLKMYPVEVVVRNVIAGSLKKRLPLKEGTELSEPIVELYYKNDDLGDPMINHYHAKVLGVSERELKEIENIALKVNNILKEYFAQRGIILVDFKLEFGKNERGEIILGDEISPDTCRFWDAETKESLDKDVFRFDKGELINAYEELYKRLTA</sequence>
<protein>
    <recommendedName>
        <fullName evidence="1">Phosphoribosylaminoimidazole-succinocarboxamide synthase</fullName>
        <ecNumber evidence="1">6.3.2.6</ecNumber>
    </recommendedName>
    <alternativeName>
        <fullName evidence="1">SAICAR synthetase</fullName>
    </alternativeName>
</protein>
<evidence type="ECO:0000255" key="1">
    <source>
        <dbReference type="HAMAP-Rule" id="MF_00137"/>
    </source>
</evidence>